<feature type="chain" id="PRO_1000193092" description="Dihydroorotase">
    <location>
        <begin position="1"/>
        <end position="428"/>
    </location>
</feature>
<feature type="active site" evidence="1">
    <location>
        <position position="304"/>
    </location>
</feature>
<feature type="binding site" evidence="1">
    <location>
        <position position="59"/>
    </location>
    <ligand>
        <name>Zn(2+)</name>
        <dbReference type="ChEBI" id="CHEBI:29105"/>
        <label>1</label>
    </ligand>
</feature>
<feature type="binding site" evidence="1">
    <location>
        <begin position="61"/>
        <end position="63"/>
    </location>
    <ligand>
        <name>substrate</name>
    </ligand>
</feature>
<feature type="binding site" evidence="1">
    <location>
        <position position="61"/>
    </location>
    <ligand>
        <name>Zn(2+)</name>
        <dbReference type="ChEBI" id="CHEBI:29105"/>
        <label>1</label>
    </ligand>
</feature>
<feature type="binding site" evidence="1">
    <location>
        <position position="93"/>
    </location>
    <ligand>
        <name>substrate</name>
    </ligand>
</feature>
<feature type="binding site" evidence="1">
    <location>
        <position position="151"/>
    </location>
    <ligand>
        <name>Zn(2+)</name>
        <dbReference type="ChEBI" id="CHEBI:29105"/>
        <label>1</label>
    </ligand>
</feature>
<feature type="binding site" evidence="1">
    <location>
        <position position="151"/>
    </location>
    <ligand>
        <name>Zn(2+)</name>
        <dbReference type="ChEBI" id="CHEBI:29105"/>
        <label>2</label>
    </ligand>
</feature>
<feature type="binding site" evidence="1">
    <location>
        <position position="178"/>
    </location>
    <ligand>
        <name>Zn(2+)</name>
        <dbReference type="ChEBI" id="CHEBI:29105"/>
        <label>2</label>
    </ligand>
</feature>
<feature type="binding site" evidence="1">
    <location>
        <position position="231"/>
    </location>
    <ligand>
        <name>Zn(2+)</name>
        <dbReference type="ChEBI" id="CHEBI:29105"/>
        <label>2</label>
    </ligand>
</feature>
<feature type="binding site" evidence="1">
    <location>
        <position position="277"/>
    </location>
    <ligand>
        <name>substrate</name>
    </ligand>
</feature>
<feature type="binding site" evidence="1">
    <location>
        <position position="304"/>
    </location>
    <ligand>
        <name>Zn(2+)</name>
        <dbReference type="ChEBI" id="CHEBI:29105"/>
        <label>1</label>
    </ligand>
</feature>
<feature type="binding site" evidence="1">
    <location>
        <position position="308"/>
    </location>
    <ligand>
        <name>substrate</name>
    </ligand>
</feature>
<feature type="binding site" evidence="1">
    <location>
        <begin position="322"/>
        <end position="323"/>
    </location>
    <ligand>
        <name>substrate</name>
    </ligand>
</feature>
<comment type="function">
    <text evidence="1">Catalyzes the reversible cyclization of carbamoyl aspartate to dihydroorotate.</text>
</comment>
<comment type="catalytic activity">
    <reaction evidence="1">
        <text>(S)-dihydroorotate + H2O = N-carbamoyl-L-aspartate + H(+)</text>
        <dbReference type="Rhea" id="RHEA:24296"/>
        <dbReference type="ChEBI" id="CHEBI:15377"/>
        <dbReference type="ChEBI" id="CHEBI:15378"/>
        <dbReference type="ChEBI" id="CHEBI:30864"/>
        <dbReference type="ChEBI" id="CHEBI:32814"/>
        <dbReference type="EC" id="3.5.2.3"/>
    </reaction>
</comment>
<comment type="cofactor">
    <cofactor evidence="1">
        <name>Zn(2+)</name>
        <dbReference type="ChEBI" id="CHEBI:29105"/>
    </cofactor>
    <text evidence="1">Binds 2 Zn(2+) ions per subunit.</text>
</comment>
<comment type="pathway">
    <text evidence="1">Pyrimidine metabolism; UMP biosynthesis via de novo pathway; (S)-dihydroorotate from bicarbonate: step 3/3.</text>
</comment>
<comment type="similarity">
    <text evidence="1">Belongs to the metallo-dependent hydrolases superfamily. DHOase family. Class I DHOase subfamily.</text>
</comment>
<proteinExistence type="inferred from homology"/>
<accession>B7JJX5</accession>
<gene>
    <name evidence="1" type="primary">pyrC</name>
    <name type="ordered locus">BCAH820_3902</name>
</gene>
<sequence>MNYLFKNGRYMNEEGKIVATDLLVQDGKIAKVAENITADNAEVIDVNGKLIAPGLVDVHVHLREPGGEHKETIETGTLAAAKGGFTTICAMPNTRPVPDCREHMEDLQNRIKEKAHVNVLPYGAITVRQAGSEMTDFETLKELGAFAFTDDGVGVQDASMMLAAMKRAAKLNMAVVAHCEENTLINKGCVHEGKFSEKHGLNGIPSVCESVHIARDILLAEAADCHYHVCHVSTKGSVRVIRDAKRAGIKVTAEVTPHHLVLCEDDIPSADPNFKMNPPLRGKEDHEALIEGLLDGTIDMIATDHAPHTAEEKAQGIERAPFGITGFETAFPLLYTNLVKKGIITLEQLIQFLTEKPADTFGLEAGRLKEGRTADITIIDLEQEEEIDPTTFLSKGKNTPFAGWKCQGWPVMTIVGGKIAWQKESALV</sequence>
<dbReference type="EC" id="3.5.2.3" evidence="1"/>
<dbReference type="EMBL" id="CP001283">
    <property type="protein sequence ID" value="ACK88888.1"/>
    <property type="molecule type" value="Genomic_DNA"/>
</dbReference>
<dbReference type="RefSeq" id="WP_001108379.1">
    <property type="nucleotide sequence ID" value="NC_011773.1"/>
</dbReference>
<dbReference type="SMR" id="B7JJX5"/>
<dbReference type="GeneID" id="45023717"/>
<dbReference type="KEGG" id="bcu:BCAH820_3902"/>
<dbReference type="HOGENOM" id="CLU_015572_1_0_9"/>
<dbReference type="UniPathway" id="UPA00070">
    <property type="reaction ID" value="UER00117"/>
</dbReference>
<dbReference type="Proteomes" id="UP000001363">
    <property type="component" value="Chromosome"/>
</dbReference>
<dbReference type="GO" id="GO:0005737">
    <property type="term" value="C:cytoplasm"/>
    <property type="evidence" value="ECO:0007669"/>
    <property type="project" value="TreeGrafter"/>
</dbReference>
<dbReference type="GO" id="GO:0004038">
    <property type="term" value="F:allantoinase activity"/>
    <property type="evidence" value="ECO:0007669"/>
    <property type="project" value="TreeGrafter"/>
</dbReference>
<dbReference type="GO" id="GO:0004151">
    <property type="term" value="F:dihydroorotase activity"/>
    <property type="evidence" value="ECO:0007669"/>
    <property type="project" value="UniProtKB-UniRule"/>
</dbReference>
<dbReference type="GO" id="GO:0008270">
    <property type="term" value="F:zinc ion binding"/>
    <property type="evidence" value="ECO:0007669"/>
    <property type="project" value="UniProtKB-UniRule"/>
</dbReference>
<dbReference type="GO" id="GO:0044205">
    <property type="term" value="P:'de novo' UMP biosynthetic process"/>
    <property type="evidence" value="ECO:0007669"/>
    <property type="project" value="UniProtKB-UniRule"/>
</dbReference>
<dbReference type="GO" id="GO:0006145">
    <property type="term" value="P:purine nucleobase catabolic process"/>
    <property type="evidence" value="ECO:0007669"/>
    <property type="project" value="TreeGrafter"/>
</dbReference>
<dbReference type="CDD" id="cd01317">
    <property type="entry name" value="DHOase_IIa"/>
    <property type="match status" value="1"/>
</dbReference>
<dbReference type="FunFam" id="2.30.40.10:FF:000007">
    <property type="entry name" value="Dihydroorotase"/>
    <property type="match status" value="1"/>
</dbReference>
<dbReference type="FunFam" id="3.20.20.140:FF:000025">
    <property type="entry name" value="Dihydroorotase"/>
    <property type="match status" value="1"/>
</dbReference>
<dbReference type="Gene3D" id="3.20.20.140">
    <property type="entry name" value="Metal-dependent hydrolases"/>
    <property type="match status" value="1"/>
</dbReference>
<dbReference type="Gene3D" id="2.30.40.10">
    <property type="entry name" value="Urease, subunit C, domain 1"/>
    <property type="match status" value="2"/>
</dbReference>
<dbReference type="HAMAP" id="MF_00220_B">
    <property type="entry name" value="PyrC_classI_B"/>
    <property type="match status" value="1"/>
</dbReference>
<dbReference type="InterPro" id="IPR006680">
    <property type="entry name" value="Amidohydro-rel"/>
</dbReference>
<dbReference type="InterPro" id="IPR004722">
    <property type="entry name" value="DHOase"/>
</dbReference>
<dbReference type="InterPro" id="IPR050138">
    <property type="entry name" value="DHOase/Allantoinase_Hydrolase"/>
</dbReference>
<dbReference type="InterPro" id="IPR002195">
    <property type="entry name" value="Dihydroorotase_CS"/>
</dbReference>
<dbReference type="InterPro" id="IPR011059">
    <property type="entry name" value="Metal-dep_hydrolase_composite"/>
</dbReference>
<dbReference type="InterPro" id="IPR032466">
    <property type="entry name" value="Metal_Hydrolase"/>
</dbReference>
<dbReference type="NCBIfam" id="NF006837">
    <property type="entry name" value="PRK09357.1-2"/>
    <property type="match status" value="1"/>
</dbReference>
<dbReference type="NCBIfam" id="TIGR00857">
    <property type="entry name" value="pyrC_multi"/>
    <property type="match status" value="1"/>
</dbReference>
<dbReference type="PANTHER" id="PTHR43668">
    <property type="entry name" value="ALLANTOINASE"/>
    <property type="match status" value="1"/>
</dbReference>
<dbReference type="PANTHER" id="PTHR43668:SF2">
    <property type="entry name" value="ALLANTOINASE"/>
    <property type="match status" value="1"/>
</dbReference>
<dbReference type="Pfam" id="PF01979">
    <property type="entry name" value="Amidohydro_1"/>
    <property type="match status" value="1"/>
</dbReference>
<dbReference type="SUPFAM" id="SSF51338">
    <property type="entry name" value="Composite domain of metallo-dependent hydrolases"/>
    <property type="match status" value="1"/>
</dbReference>
<dbReference type="SUPFAM" id="SSF51556">
    <property type="entry name" value="Metallo-dependent hydrolases"/>
    <property type="match status" value="1"/>
</dbReference>
<dbReference type="PROSITE" id="PS00482">
    <property type="entry name" value="DIHYDROOROTASE_1"/>
    <property type="match status" value="1"/>
</dbReference>
<dbReference type="PROSITE" id="PS00483">
    <property type="entry name" value="DIHYDROOROTASE_2"/>
    <property type="match status" value="1"/>
</dbReference>
<evidence type="ECO:0000255" key="1">
    <source>
        <dbReference type="HAMAP-Rule" id="MF_00220"/>
    </source>
</evidence>
<keyword id="KW-0378">Hydrolase</keyword>
<keyword id="KW-0479">Metal-binding</keyword>
<keyword id="KW-0665">Pyrimidine biosynthesis</keyword>
<keyword id="KW-0862">Zinc</keyword>
<protein>
    <recommendedName>
        <fullName evidence="1">Dihydroorotase</fullName>
        <shortName evidence="1">DHOase</shortName>
        <ecNumber evidence="1">3.5.2.3</ecNumber>
    </recommendedName>
</protein>
<organism>
    <name type="scientific">Bacillus cereus (strain AH820)</name>
    <dbReference type="NCBI Taxonomy" id="405535"/>
    <lineage>
        <taxon>Bacteria</taxon>
        <taxon>Bacillati</taxon>
        <taxon>Bacillota</taxon>
        <taxon>Bacilli</taxon>
        <taxon>Bacillales</taxon>
        <taxon>Bacillaceae</taxon>
        <taxon>Bacillus</taxon>
        <taxon>Bacillus cereus group</taxon>
    </lineage>
</organism>
<name>PYRC_BACC0</name>
<reference key="1">
    <citation type="submission" date="2008-10" db="EMBL/GenBank/DDBJ databases">
        <title>Genome sequence of Bacillus cereus AH820.</title>
        <authorList>
            <person name="Dodson R.J."/>
            <person name="Durkin A.S."/>
            <person name="Rosovitz M.J."/>
            <person name="Rasko D.A."/>
            <person name="Hoffmaster A."/>
            <person name="Ravel J."/>
            <person name="Sutton G."/>
        </authorList>
    </citation>
    <scope>NUCLEOTIDE SEQUENCE [LARGE SCALE GENOMIC DNA]</scope>
    <source>
        <strain>AH820</strain>
    </source>
</reference>